<keyword id="KW-0687">Ribonucleoprotein</keyword>
<keyword id="KW-0689">Ribosomal protein</keyword>
<sequence>MQVLSSLRSAKNRHPDCKIVRRRGRVYVICKSNPRFKAVQGGTHKKR</sequence>
<name>RL362_YERPY</name>
<gene>
    <name evidence="1" type="primary">rpmJ2</name>
    <name type="ordered locus">YPK_3211</name>
</gene>
<organism>
    <name type="scientific">Yersinia pseudotuberculosis serotype O:3 (strain YPIII)</name>
    <dbReference type="NCBI Taxonomy" id="502800"/>
    <lineage>
        <taxon>Bacteria</taxon>
        <taxon>Pseudomonadati</taxon>
        <taxon>Pseudomonadota</taxon>
        <taxon>Gammaproteobacteria</taxon>
        <taxon>Enterobacterales</taxon>
        <taxon>Yersiniaceae</taxon>
        <taxon>Yersinia</taxon>
    </lineage>
</organism>
<proteinExistence type="inferred from homology"/>
<dbReference type="EMBL" id="CP000950">
    <property type="protein sequence ID" value="ACA69480.1"/>
    <property type="molecule type" value="Genomic_DNA"/>
</dbReference>
<dbReference type="SMR" id="B1JHP8"/>
<dbReference type="KEGG" id="ypy:YPK_3211"/>
<dbReference type="PATRIC" id="fig|502800.11.peg.3938"/>
<dbReference type="GO" id="GO:1990904">
    <property type="term" value="C:ribonucleoprotein complex"/>
    <property type="evidence" value="ECO:0007669"/>
    <property type="project" value="UniProtKB-KW"/>
</dbReference>
<dbReference type="GO" id="GO:0005840">
    <property type="term" value="C:ribosome"/>
    <property type="evidence" value="ECO:0007669"/>
    <property type="project" value="UniProtKB-KW"/>
</dbReference>
<dbReference type="GO" id="GO:0003735">
    <property type="term" value="F:structural constituent of ribosome"/>
    <property type="evidence" value="ECO:0007669"/>
    <property type="project" value="InterPro"/>
</dbReference>
<dbReference type="GO" id="GO:0006412">
    <property type="term" value="P:translation"/>
    <property type="evidence" value="ECO:0007669"/>
    <property type="project" value="UniProtKB-UniRule"/>
</dbReference>
<dbReference type="HAMAP" id="MF_00251">
    <property type="entry name" value="Ribosomal_bL36"/>
    <property type="match status" value="1"/>
</dbReference>
<dbReference type="InterPro" id="IPR000473">
    <property type="entry name" value="Ribosomal_bL36"/>
</dbReference>
<dbReference type="InterPro" id="IPR035977">
    <property type="entry name" value="Ribosomal_bL36_sp"/>
</dbReference>
<dbReference type="InterPro" id="IPR047621">
    <property type="entry name" value="Ribosomal_L36_bact"/>
</dbReference>
<dbReference type="NCBIfam" id="NF002021">
    <property type="entry name" value="PRK00831.1"/>
    <property type="match status" value="1"/>
</dbReference>
<dbReference type="NCBIfam" id="TIGR01022">
    <property type="entry name" value="rpmJ_bact"/>
    <property type="match status" value="1"/>
</dbReference>
<dbReference type="PANTHER" id="PTHR47781">
    <property type="entry name" value="50S RIBOSOMAL PROTEIN L36 2"/>
    <property type="match status" value="1"/>
</dbReference>
<dbReference type="PANTHER" id="PTHR47781:SF1">
    <property type="entry name" value="LARGE RIBOSOMAL SUBUNIT PROTEIN BL36B"/>
    <property type="match status" value="1"/>
</dbReference>
<dbReference type="Pfam" id="PF00444">
    <property type="entry name" value="Ribosomal_L36"/>
    <property type="match status" value="1"/>
</dbReference>
<dbReference type="SUPFAM" id="SSF57840">
    <property type="entry name" value="Ribosomal protein L36"/>
    <property type="match status" value="1"/>
</dbReference>
<dbReference type="PROSITE" id="PS00828">
    <property type="entry name" value="RIBOSOMAL_L36"/>
    <property type="match status" value="1"/>
</dbReference>
<accession>B1JHP8</accession>
<reference key="1">
    <citation type="submission" date="2008-02" db="EMBL/GenBank/DDBJ databases">
        <title>Complete sequence of Yersinia pseudotuberculosis YPIII.</title>
        <authorList>
            <consortium name="US DOE Joint Genome Institute"/>
            <person name="Copeland A."/>
            <person name="Lucas S."/>
            <person name="Lapidus A."/>
            <person name="Glavina del Rio T."/>
            <person name="Dalin E."/>
            <person name="Tice H."/>
            <person name="Bruce D."/>
            <person name="Goodwin L."/>
            <person name="Pitluck S."/>
            <person name="Munk A.C."/>
            <person name="Brettin T."/>
            <person name="Detter J.C."/>
            <person name="Han C."/>
            <person name="Tapia R."/>
            <person name="Schmutz J."/>
            <person name="Larimer F."/>
            <person name="Land M."/>
            <person name="Hauser L."/>
            <person name="Challacombe J.F."/>
            <person name="Green L."/>
            <person name="Lindler L.E."/>
            <person name="Nikolich M.P."/>
            <person name="Richardson P."/>
        </authorList>
    </citation>
    <scope>NUCLEOTIDE SEQUENCE [LARGE SCALE GENOMIC DNA]</scope>
    <source>
        <strain>YPIII</strain>
    </source>
</reference>
<feature type="chain" id="PRO_0000344737" description="Large ribosomal subunit protein bL36B">
    <location>
        <begin position="1"/>
        <end position="47"/>
    </location>
</feature>
<protein>
    <recommendedName>
        <fullName evidence="1">Large ribosomal subunit protein bL36B</fullName>
    </recommendedName>
    <alternativeName>
        <fullName evidence="2">50S ribosomal protein L36 2</fullName>
    </alternativeName>
</protein>
<comment type="similarity">
    <text evidence="1">Belongs to the bacterial ribosomal protein bL36 family.</text>
</comment>
<evidence type="ECO:0000255" key="1">
    <source>
        <dbReference type="HAMAP-Rule" id="MF_00251"/>
    </source>
</evidence>
<evidence type="ECO:0000305" key="2"/>